<name>VE6_HPV66</name>
<sequence length="155" mass="18610">MDSIFSNTQERPRSLHHLSEVLQIPLLDLRLSCVYCKKELTSLELYRFACIELKLVYRNNWPYAVCRVCLLFYSKVRKYRYYKYSVYGATLESITKKQLSDLSIRCYRCQCPLTPEEKQLHCEHKRRFHYIAYAWTGSCLQCWRHTSRQATESTV</sequence>
<dbReference type="EMBL" id="M75123">
    <property type="status" value="NOT_ANNOTATED_CDS"/>
    <property type="molecule type" value="Genomic_DNA"/>
</dbReference>
<dbReference type="EMBL" id="U31794">
    <property type="protein sequence ID" value="AAA79499.1"/>
    <property type="molecule type" value="Genomic_DNA"/>
</dbReference>
<dbReference type="PIR" id="A44890">
    <property type="entry name" value="A44890"/>
</dbReference>
<dbReference type="PDB" id="8B8O">
    <property type="method" value="X-ray"/>
    <property type="resolution" value="2.90 A"/>
    <property type="chains" value="C/D=146-155"/>
</dbReference>
<dbReference type="PDBsum" id="8B8O"/>
<dbReference type="SMR" id="Q80955"/>
<dbReference type="Proteomes" id="UP000007673">
    <property type="component" value="Genome"/>
</dbReference>
<dbReference type="GO" id="GO:0030430">
    <property type="term" value="C:host cell cytoplasm"/>
    <property type="evidence" value="ECO:0007669"/>
    <property type="project" value="UniProtKB-SubCell"/>
</dbReference>
<dbReference type="GO" id="GO:0042025">
    <property type="term" value="C:host cell nucleus"/>
    <property type="evidence" value="ECO:0007669"/>
    <property type="project" value="UniProtKB-SubCell"/>
</dbReference>
<dbReference type="GO" id="GO:0003677">
    <property type="term" value="F:DNA binding"/>
    <property type="evidence" value="ECO:0007669"/>
    <property type="project" value="UniProtKB-UniRule"/>
</dbReference>
<dbReference type="GO" id="GO:0008270">
    <property type="term" value="F:zinc ion binding"/>
    <property type="evidence" value="ECO:0007669"/>
    <property type="project" value="UniProtKB-KW"/>
</dbReference>
<dbReference type="GO" id="GO:0006351">
    <property type="term" value="P:DNA-templated transcription"/>
    <property type="evidence" value="ECO:0007669"/>
    <property type="project" value="UniProtKB-UniRule"/>
</dbReference>
<dbReference type="GO" id="GO:0006355">
    <property type="term" value="P:regulation of DNA-templated transcription"/>
    <property type="evidence" value="ECO:0007669"/>
    <property type="project" value="UniProtKB-UniRule"/>
</dbReference>
<dbReference type="GO" id="GO:0052150">
    <property type="term" value="P:symbiont-mediated perturbation of host apoptosis"/>
    <property type="evidence" value="ECO:0007669"/>
    <property type="project" value="UniProtKB-KW"/>
</dbReference>
<dbReference type="GO" id="GO:0039648">
    <property type="term" value="P:symbiont-mediated perturbation of host ubiquitin-like protein modification"/>
    <property type="evidence" value="ECO:0007669"/>
    <property type="project" value="UniProtKB-UniRule"/>
</dbReference>
<dbReference type="GO" id="GO:0052170">
    <property type="term" value="P:symbiont-mediated suppression of host innate immune response"/>
    <property type="evidence" value="ECO:0007669"/>
    <property type="project" value="UniProtKB-KW"/>
</dbReference>
<dbReference type="GO" id="GO:0039502">
    <property type="term" value="P:symbiont-mediated suppression of host type I interferon-mediated signaling pathway"/>
    <property type="evidence" value="ECO:0007669"/>
    <property type="project" value="UniProtKB-UniRule"/>
</dbReference>
<dbReference type="Gene3D" id="3.30.240.40">
    <property type="entry name" value="E6 early regulatory protein"/>
    <property type="match status" value="2"/>
</dbReference>
<dbReference type="HAMAP" id="MF_04006">
    <property type="entry name" value="HPV_E6"/>
    <property type="match status" value="1"/>
</dbReference>
<dbReference type="InterPro" id="IPR001334">
    <property type="entry name" value="E6"/>
</dbReference>
<dbReference type="InterPro" id="IPR038575">
    <property type="entry name" value="E6_sf"/>
</dbReference>
<dbReference type="Pfam" id="PF00518">
    <property type="entry name" value="E6"/>
    <property type="match status" value="1"/>
</dbReference>
<dbReference type="SUPFAM" id="SSF161229">
    <property type="entry name" value="E6 C-terminal domain-like"/>
    <property type="match status" value="2"/>
</dbReference>
<proteinExistence type="evidence at protein level"/>
<reference key="1">
    <citation type="journal article" date="1991" name="J. Clin. Microbiol.">
        <title>Characterization of human papillomavirus type 66 from an invasive carcinoma of the uterine cervix.</title>
        <authorList>
            <person name="Tawheed A.R."/>
            <person name="Beaudenon S."/>
            <person name="Favre M."/>
            <person name="Orth G."/>
        </authorList>
    </citation>
    <scope>NUCLEOTIDE SEQUENCE [GENOMIC DNA]</scope>
</reference>
<reference key="2">
    <citation type="submission" date="1995-10" db="EMBL/GenBank/DDBJ databases">
        <authorList>
            <person name="Delius H."/>
        </authorList>
    </citation>
    <scope>NUCLEOTIDE SEQUENCE [GENOMIC DNA]</scope>
</reference>
<protein>
    <recommendedName>
        <fullName evidence="1">Protein E6</fullName>
    </recommendedName>
</protein>
<gene>
    <name evidence="1" type="primary">E6</name>
</gene>
<keyword id="KW-0002">3D-structure</keyword>
<keyword id="KW-0010">Activator</keyword>
<keyword id="KW-0238">DNA-binding</keyword>
<keyword id="KW-0244">Early protein</keyword>
<keyword id="KW-1035">Host cytoplasm</keyword>
<keyword id="KW-1048">Host nucleus</keyword>
<keyword id="KW-0945">Host-virus interaction</keyword>
<keyword id="KW-1090">Inhibition of host innate immune response by virus</keyword>
<keyword id="KW-0479">Metal-binding</keyword>
<keyword id="KW-1119">Modulation of host cell apoptosis by virus</keyword>
<keyword id="KW-0804">Transcription</keyword>
<keyword id="KW-0805">Transcription regulation</keyword>
<keyword id="KW-0899">Viral immunoevasion</keyword>
<keyword id="KW-0862">Zinc</keyword>
<keyword id="KW-0863">Zinc-finger</keyword>
<organismHost>
    <name type="scientific">Homo sapiens</name>
    <name type="common">Human</name>
    <dbReference type="NCBI Taxonomy" id="9606"/>
</organismHost>
<feature type="chain" id="PRO_0000133379" description="Protein E6">
    <location>
        <begin position="1"/>
        <end position="155"/>
    </location>
</feature>
<feature type="zinc finger region" evidence="1">
    <location>
        <begin position="33"/>
        <end position="69"/>
    </location>
</feature>
<feature type="zinc finger region" evidence="1">
    <location>
        <begin position="106"/>
        <end position="142"/>
    </location>
</feature>
<feature type="strand" evidence="3">
    <location>
        <begin position="152"/>
        <end position="154"/>
    </location>
</feature>
<organism>
    <name type="scientific">Human papillomavirus 66</name>
    <dbReference type="NCBI Taxonomy" id="37119"/>
    <lineage>
        <taxon>Viruses</taxon>
        <taxon>Monodnaviria</taxon>
        <taxon>Shotokuvirae</taxon>
        <taxon>Cossaviricota</taxon>
        <taxon>Papovaviricetes</taxon>
        <taxon>Zurhausenvirales</taxon>
        <taxon>Papillomaviridae</taxon>
        <taxon>Firstpapillomavirinae</taxon>
        <taxon>Alphapapillomavirus</taxon>
        <taxon>Alphapapillomavirus 6</taxon>
    </lineage>
</organism>
<accession>Q80955</accession>
<comment type="function">
    <text evidence="1">Plays a major role in the induction and maintenance of cellular transformation. E6 associates with host UBE3A/E6-AP ubiquitin-protein ligase and modulates its activity. Sequesters tumor suppressor TP53 in the host cytoplasm and modulates its activity by interacting with host EP300 that results in the reduction of TP53 acetylation and activation. In turn, apoptosis induced by DNA damage is inhibited. E6 also protects host keratinocytes from apoptosis by mediating the degradation of host BAK1. May also inhibit host immune response.</text>
</comment>
<comment type="subunit">
    <text evidence="1">Forms homodimers. Interacts with ubiquitin-protein ligase UBE3A/E6-AP; this interaction stimulates UBE3A ubiquitin activity. Interacts with host TP53 and EP300; this interaction inhibits TP53 activity.</text>
</comment>
<comment type="subcellular location">
    <subcellularLocation>
        <location evidence="1">Host cytoplasm</location>
    </subcellularLocation>
    <subcellularLocation>
        <location evidence="1">Host nucleus</location>
    </subcellularLocation>
</comment>
<comment type="miscellaneous">
    <text evidence="1">Belongs to the low risk human alphapapillomavirus family. The cancer-causing human papillomavirus E6 protein has a unique carboxy terminal PDZ domain containing substrate but low risk E6s do not possess this domain.</text>
</comment>
<comment type="similarity">
    <text evidence="2">Belongs to the papillomaviridae E6 protein family.</text>
</comment>
<evidence type="ECO:0000255" key="1">
    <source>
        <dbReference type="HAMAP-Rule" id="MF_04006"/>
    </source>
</evidence>
<evidence type="ECO:0000305" key="2"/>
<evidence type="ECO:0007829" key="3">
    <source>
        <dbReference type="PDB" id="8B8O"/>
    </source>
</evidence>